<feature type="chain" id="PRO_1000126251" description="Transaldolase">
    <location>
        <begin position="1"/>
        <end position="307"/>
    </location>
</feature>
<feature type="active site" description="Schiff-base intermediate with substrate" evidence="2">
    <location>
        <position position="125"/>
    </location>
</feature>
<reference key="1">
    <citation type="journal article" date="2009" name="Genome Res.">
        <title>Newly introduced genomic prophage islands are critical determinants of in vivo competitiveness in the Liverpool epidemic strain of Pseudomonas aeruginosa.</title>
        <authorList>
            <person name="Winstanley C."/>
            <person name="Langille M.G.I."/>
            <person name="Fothergill J.L."/>
            <person name="Kukavica-Ibrulj I."/>
            <person name="Paradis-Bleau C."/>
            <person name="Sanschagrin F."/>
            <person name="Thomson N.R."/>
            <person name="Winsor G.L."/>
            <person name="Quail M.A."/>
            <person name="Lennard N."/>
            <person name="Bignell A."/>
            <person name="Clarke L."/>
            <person name="Seeger K."/>
            <person name="Saunders D."/>
            <person name="Harris D."/>
            <person name="Parkhill J."/>
            <person name="Hancock R.E.W."/>
            <person name="Brinkman F.S.L."/>
            <person name="Levesque R.C."/>
        </authorList>
    </citation>
    <scope>NUCLEOTIDE SEQUENCE [LARGE SCALE GENOMIC DNA]</scope>
    <source>
        <strain>LESB58</strain>
    </source>
</reference>
<dbReference type="EC" id="2.2.1.2" evidence="2"/>
<dbReference type="EMBL" id="FM209186">
    <property type="protein sequence ID" value="CAW27003.1"/>
    <property type="molecule type" value="Genomic_DNA"/>
</dbReference>
<dbReference type="RefSeq" id="WP_012613934.1">
    <property type="nucleotide sequence ID" value="NC_011770.1"/>
</dbReference>
<dbReference type="SMR" id="B7UWP0"/>
<dbReference type="KEGG" id="pag:PLES_22761"/>
<dbReference type="HOGENOM" id="CLU_047470_0_1_6"/>
<dbReference type="UniPathway" id="UPA00115">
    <property type="reaction ID" value="UER00414"/>
</dbReference>
<dbReference type="GO" id="GO:0005829">
    <property type="term" value="C:cytosol"/>
    <property type="evidence" value="ECO:0007669"/>
    <property type="project" value="TreeGrafter"/>
</dbReference>
<dbReference type="GO" id="GO:0004801">
    <property type="term" value="F:transaldolase activity"/>
    <property type="evidence" value="ECO:0000250"/>
    <property type="project" value="UniProtKB"/>
</dbReference>
<dbReference type="GO" id="GO:0005975">
    <property type="term" value="P:carbohydrate metabolic process"/>
    <property type="evidence" value="ECO:0007669"/>
    <property type="project" value="InterPro"/>
</dbReference>
<dbReference type="GO" id="GO:0006098">
    <property type="term" value="P:pentose-phosphate shunt"/>
    <property type="evidence" value="ECO:0007669"/>
    <property type="project" value="UniProtKB-UniRule"/>
</dbReference>
<dbReference type="CDD" id="cd00957">
    <property type="entry name" value="Transaldolase_TalAB"/>
    <property type="match status" value="1"/>
</dbReference>
<dbReference type="FunFam" id="3.20.20.70:FF:000002">
    <property type="entry name" value="Transaldolase"/>
    <property type="match status" value="1"/>
</dbReference>
<dbReference type="Gene3D" id="3.20.20.70">
    <property type="entry name" value="Aldolase class I"/>
    <property type="match status" value="1"/>
</dbReference>
<dbReference type="HAMAP" id="MF_00492">
    <property type="entry name" value="Transaldolase_1"/>
    <property type="match status" value="1"/>
</dbReference>
<dbReference type="InterPro" id="IPR013785">
    <property type="entry name" value="Aldolase_TIM"/>
</dbReference>
<dbReference type="InterPro" id="IPR001585">
    <property type="entry name" value="TAL/FSA"/>
</dbReference>
<dbReference type="InterPro" id="IPR004730">
    <property type="entry name" value="Transaldolase_1"/>
</dbReference>
<dbReference type="InterPro" id="IPR018225">
    <property type="entry name" value="Transaldolase_AS"/>
</dbReference>
<dbReference type="NCBIfam" id="NF009001">
    <property type="entry name" value="PRK12346.1"/>
    <property type="match status" value="1"/>
</dbReference>
<dbReference type="NCBIfam" id="TIGR00874">
    <property type="entry name" value="talAB"/>
    <property type="match status" value="1"/>
</dbReference>
<dbReference type="PANTHER" id="PTHR10683">
    <property type="entry name" value="TRANSALDOLASE"/>
    <property type="match status" value="1"/>
</dbReference>
<dbReference type="PANTHER" id="PTHR10683:SF18">
    <property type="entry name" value="TRANSALDOLASE"/>
    <property type="match status" value="1"/>
</dbReference>
<dbReference type="Pfam" id="PF00923">
    <property type="entry name" value="TAL_FSA"/>
    <property type="match status" value="1"/>
</dbReference>
<dbReference type="SUPFAM" id="SSF51569">
    <property type="entry name" value="Aldolase"/>
    <property type="match status" value="1"/>
</dbReference>
<dbReference type="PROSITE" id="PS01054">
    <property type="entry name" value="TRANSALDOLASE_1"/>
    <property type="match status" value="1"/>
</dbReference>
<dbReference type="PROSITE" id="PS00958">
    <property type="entry name" value="TRANSALDOLASE_2"/>
    <property type="match status" value="1"/>
</dbReference>
<keyword id="KW-0963">Cytoplasm</keyword>
<keyword id="KW-0570">Pentose shunt</keyword>
<keyword id="KW-0704">Schiff base</keyword>
<keyword id="KW-0808">Transferase</keyword>
<proteinExistence type="inferred from homology"/>
<sequence>MTSKLEQLKQYTTVVADTGDFDAIARLKPVDATTNPSLLLKAAALPRYAEHLRQATAGSGGDAGLACDRFAVAVGKDILGVIPGRISTEVDARLSFDSEATLARAHRLIELYDEQGIDRERVLIKIASTWEGIRAAEILEREGIQTNLTLLFSFAQAVACADAGVFLISPFVGRIYDWYKKSENRDYVGAEDPGVQSVSRIYRYYKANGYKTVVMGASFRNLGQIEQLAGCDRLTISPDLLQQLADAQGELPRLLLPGEGEPRQVLDESTFRWQMNEDAMATEKLAEGIRLFARDQEKLEYQLATRH</sequence>
<evidence type="ECO:0000250" key="1"/>
<evidence type="ECO:0000255" key="2">
    <source>
        <dbReference type="HAMAP-Rule" id="MF_00492"/>
    </source>
</evidence>
<accession>B7UWP0</accession>
<comment type="function">
    <text evidence="2">Transaldolase is important for the balance of metabolites in the pentose-phosphate pathway.</text>
</comment>
<comment type="catalytic activity">
    <reaction evidence="2">
        <text>D-sedoheptulose 7-phosphate + D-glyceraldehyde 3-phosphate = D-erythrose 4-phosphate + beta-D-fructose 6-phosphate</text>
        <dbReference type="Rhea" id="RHEA:17053"/>
        <dbReference type="ChEBI" id="CHEBI:16897"/>
        <dbReference type="ChEBI" id="CHEBI:57483"/>
        <dbReference type="ChEBI" id="CHEBI:57634"/>
        <dbReference type="ChEBI" id="CHEBI:59776"/>
        <dbReference type="EC" id="2.2.1.2"/>
    </reaction>
</comment>
<comment type="pathway">
    <text evidence="2">Carbohydrate degradation; pentose phosphate pathway; D-glyceraldehyde 3-phosphate and beta-D-fructose 6-phosphate from D-ribose 5-phosphate and D-xylulose 5-phosphate (non-oxidative stage): step 2/3.</text>
</comment>
<comment type="subunit">
    <text evidence="1">Homodimer.</text>
</comment>
<comment type="subcellular location">
    <subcellularLocation>
        <location evidence="2">Cytoplasm</location>
    </subcellularLocation>
</comment>
<comment type="similarity">
    <text evidence="2">Belongs to the transaldolase family. Type 1 subfamily.</text>
</comment>
<gene>
    <name evidence="2" type="primary">tal</name>
    <name type="ordered locus">PLES_22761</name>
</gene>
<name>TAL_PSEA8</name>
<protein>
    <recommendedName>
        <fullName evidence="2">Transaldolase</fullName>
        <ecNumber evidence="2">2.2.1.2</ecNumber>
    </recommendedName>
</protein>
<organism>
    <name type="scientific">Pseudomonas aeruginosa (strain LESB58)</name>
    <dbReference type="NCBI Taxonomy" id="557722"/>
    <lineage>
        <taxon>Bacteria</taxon>
        <taxon>Pseudomonadati</taxon>
        <taxon>Pseudomonadota</taxon>
        <taxon>Gammaproteobacteria</taxon>
        <taxon>Pseudomonadales</taxon>
        <taxon>Pseudomonadaceae</taxon>
        <taxon>Pseudomonas</taxon>
    </lineage>
</organism>